<dbReference type="EC" id="3.6.5.n1" evidence="1"/>
<dbReference type="EMBL" id="CP001074">
    <property type="protein sequence ID" value="ACE89277.1"/>
    <property type="molecule type" value="Genomic_DNA"/>
</dbReference>
<dbReference type="SMR" id="B3PYC6"/>
<dbReference type="KEGG" id="rec:RHECIAT_CH0000283"/>
<dbReference type="eggNOG" id="COG0481">
    <property type="taxonomic scope" value="Bacteria"/>
</dbReference>
<dbReference type="HOGENOM" id="CLU_009995_3_3_5"/>
<dbReference type="Proteomes" id="UP000008817">
    <property type="component" value="Chromosome"/>
</dbReference>
<dbReference type="GO" id="GO:0005886">
    <property type="term" value="C:plasma membrane"/>
    <property type="evidence" value="ECO:0007669"/>
    <property type="project" value="UniProtKB-SubCell"/>
</dbReference>
<dbReference type="GO" id="GO:0005525">
    <property type="term" value="F:GTP binding"/>
    <property type="evidence" value="ECO:0007669"/>
    <property type="project" value="UniProtKB-UniRule"/>
</dbReference>
<dbReference type="GO" id="GO:0003924">
    <property type="term" value="F:GTPase activity"/>
    <property type="evidence" value="ECO:0007669"/>
    <property type="project" value="UniProtKB-UniRule"/>
</dbReference>
<dbReference type="GO" id="GO:0097216">
    <property type="term" value="F:guanosine tetraphosphate binding"/>
    <property type="evidence" value="ECO:0007669"/>
    <property type="project" value="UniProtKB-ARBA"/>
</dbReference>
<dbReference type="GO" id="GO:0043022">
    <property type="term" value="F:ribosome binding"/>
    <property type="evidence" value="ECO:0007669"/>
    <property type="project" value="UniProtKB-UniRule"/>
</dbReference>
<dbReference type="GO" id="GO:0003746">
    <property type="term" value="F:translation elongation factor activity"/>
    <property type="evidence" value="ECO:0007669"/>
    <property type="project" value="UniProtKB-UniRule"/>
</dbReference>
<dbReference type="GO" id="GO:0045727">
    <property type="term" value="P:positive regulation of translation"/>
    <property type="evidence" value="ECO:0007669"/>
    <property type="project" value="UniProtKB-UniRule"/>
</dbReference>
<dbReference type="CDD" id="cd03699">
    <property type="entry name" value="EF4_II"/>
    <property type="match status" value="1"/>
</dbReference>
<dbReference type="CDD" id="cd16260">
    <property type="entry name" value="EF4_III"/>
    <property type="match status" value="1"/>
</dbReference>
<dbReference type="CDD" id="cd01890">
    <property type="entry name" value="LepA"/>
    <property type="match status" value="1"/>
</dbReference>
<dbReference type="CDD" id="cd03709">
    <property type="entry name" value="lepA_C"/>
    <property type="match status" value="1"/>
</dbReference>
<dbReference type="FunFam" id="3.40.50.300:FF:000078">
    <property type="entry name" value="Elongation factor 4"/>
    <property type="match status" value="1"/>
</dbReference>
<dbReference type="FunFam" id="2.40.30.10:FF:000015">
    <property type="entry name" value="Translation factor GUF1, mitochondrial"/>
    <property type="match status" value="1"/>
</dbReference>
<dbReference type="FunFam" id="3.30.70.240:FF:000007">
    <property type="entry name" value="Translation factor GUF1, mitochondrial"/>
    <property type="match status" value="1"/>
</dbReference>
<dbReference type="FunFam" id="3.30.70.2570:FF:000001">
    <property type="entry name" value="Translation factor GUF1, mitochondrial"/>
    <property type="match status" value="1"/>
</dbReference>
<dbReference type="FunFam" id="3.30.70.870:FF:000004">
    <property type="entry name" value="Translation factor GUF1, mitochondrial"/>
    <property type="match status" value="1"/>
</dbReference>
<dbReference type="Gene3D" id="3.30.70.240">
    <property type="match status" value="1"/>
</dbReference>
<dbReference type="Gene3D" id="3.30.70.2570">
    <property type="entry name" value="Elongation factor 4, C-terminal domain"/>
    <property type="match status" value="1"/>
</dbReference>
<dbReference type="Gene3D" id="3.30.70.870">
    <property type="entry name" value="Elongation Factor G (Translational Gtpase), domain 3"/>
    <property type="match status" value="1"/>
</dbReference>
<dbReference type="Gene3D" id="3.40.50.300">
    <property type="entry name" value="P-loop containing nucleotide triphosphate hydrolases"/>
    <property type="match status" value="1"/>
</dbReference>
<dbReference type="Gene3D" id="2.40.30.10">
    <property type="entry name" value="Translation factors"/>
    <property type="match status" value="1"/>
</dbReference>
<dbReference type="HAMAP" id="MF_00071">
    <property type="entry name" value="LepA"/>
    <property type="match status" value="1"/>
</dbReference>
<dbReference type="InterPro" id="IPR006297">
    <property type="entry name" value="EF-4"/>
</dbReference>
<dbReference type="InterPro" id="IPR035647">
    <property type="entry name" value="EFG_III/V"/>
</dbReference>
<dbReference type="InterPro" id="IPR000640">
    <property type="entry name" value="EFG_V-like"/>
</dbReference>
<dbReference type="InterPro" id="IPR004161">
    <property type="entry name" value="EFTu-like_2"/>
</dbReference>
<dbReference type="InterPro" id="IPR031157">
    <property type="entry name" value="G_TR_CS"/>
</dbReference>
<dbReference type="InterPro" id="IPR038363">
    <property type="entry name" value="LepA_C_sf"/>
</dbReference>
<dbReference type="InterPro" id="IPR013842">
    <property type="entry name" value="LepA_CTD"/>
</dbReference>
<dbReference type="InterPro" id="IPR035654">
    <property type="entry name" value="LepA_IV"/>
</dbReference>
<dbReference type="InterPro" id="IPR027417">
    <property type="entry name" value="P-loop_NTPase"/>
</dbReference>
<dbReference type="InterPro" id="IPR005225">
    <property type="entry name" value="Small_GTP-bd"/>
</dbReference>
<dbReference type="InterPro" id="IPR000795">
    <property type="entry name" value="T_Tr_GTP-bd_dom"/>
</dbReference>
<dbReference type="NCBIfam" id="TIGR01393">
    <property type="entry name" value="lepA"/>
    <property type="match status" value="1"/>
</dbReference>
<dbReference type="NCBIfam" id="TIGR00231">
    <property type="entry name" value="small_GTP"/>
    <property type="match status" value="1"/>
</dbReference>
<dbReference type="PANTHER" id="PTHR43512:SF4">
    <property type="entry name" value="TRANSLATION FACTOR GUF1 HOMOLOG, CHLOROPLASTIC"/>
    <property type="match status" value="1"/>
</dbReference>
<dbReference type="PANTHER" id="PTHR43512">
    <property type="entry name" value="TRANSLATION FACTOR GUF1-RELATED"/>
    <property type="match status" value="1"/>
</dbReference>
<dbReference type="Pfam" id="PF00679">
    <property type="entry name" value="EFG_C"/>
    <property type="match status" value="1"/>
</dbReference>
<dbReference type="Pfam" id="PF00009">
    <property type="entry name" value="GTP_EFTU"/>
    <property type="match status" value="1"/>
</dbReference>
<dbReference type="Pfam" id="PF03144">
    <property type="entry name" value="GTP_EFTU_D2"/>
    <property type="match status" value="1"/>
</dbReference>
<dbReference type="Pfam" id="PF06421">
    <property type="entry name" value="LepA_C"/>
    <property type="match status" value="1"/>
</dbReference>
<dbReference type="PRINTS" id="PR00315">
    <property type="entry name" value="ELONGATNFCT"/>
</dbReference>
<dbReference type="SUPFAM" id="SSF54980">
    <property type="entry name" value="EF-G C-terminal domain-like"/>
    <property type="match status" value="2"/>
</dbReference>
<dbReference type="SUPFAM" id="SSF52540">
    <property type="entry name" value="P-loop containing nucleoside triphosphate hydrolases"/>
    <property type="match status" value="1"/>
</dbReference>
<dbReference type="PROSITE" id="PS00301">
    <property type="entry name" value="G_TR_1"/>
    <property type="match status" value="1"/>
</dbReference>
<dbReference type="PROSITE" id="PS51722">
    <property type="entry name" value="G_TR_2"/>
    <property type="match status" value="1"/>
</dbReference>
<gene>
    <name evidence="1" type="primary">lepA</name>
    <name type="ordered locus">RHECIAT_CH0000283</name>
</gene>
<accession>B3PYC6</accession>
<protein>
    <recommendedName>
        <fullName evidence="1">Elongation factor 4</fullName>
        <shortName evidence="1">EF-4</shortName>
        <ecNumber evidence="1">3.6.5.n1</ecNumber>
    </recommendedName>
    <alternativeName>
        <fullName evidence="1">Ribosomal back-translocase LepA</fullName>
    </alternativeName>
</protein>
<evidence type="ECO:0000255" key="1">
    <source>
        <dbReference type="HAMAP-Rule" id="MF_00071"/>
    </source>
</evidence>
<feature type="chain" id="PRO_1000092432" description="Elongation factor 4">
    <location>
        <begin position="1"/>
        <end position="610"/>
    </location>
</feature>
<feature type="domain" description="tr-type G">
    <location>
        <begin position="13"/>
        <end position="195"/>
    </location>
</feature>
<feature type="binding site" evidence="1">
    <location>
        <begin position="25"/>
        <end position="30"/>
    </location>
    <ligand>
        <name>GTP</name>
        <dbReference type="ChEBI" id="CHEBI:37565"/>
    </ligand>
</feature>
<feature type="binding site" evidence="1">
    <location>
        <begin position="142"/>
        <end position="145"/>
    </location>
    <ligand>
        <name>GTP</name>
        <dbReference type="ChEBI" id="CHEBI:37565"/>
    </ligand>
</feature>
<sequence>MARMSTNSTTPLSHIRNFSIVAHIDHGKSTLADRLIQTTGGLAEREMSEQVLDNMDIERERGITIKAQTVRLHYQANNGEKYILNLIDTPGHVDFAYEVSRSLSACEGSLLVVDASQGVEAQTLANVYQAIDNNHELVTVLNKIDLPAAEPDRIKEQIEEVIGIDASEAVLISAKTGLGIPDVLEAIVRKLPAPKSPGGEKAPLKALLVDSWYDTYLGVMVLVRIIDGVLTKGQTIRMMGTDAKYQVERVGVLTPKMVNVDSLGPGEIGFITASIKEVADTRVGDTITEDKRPTAQALPGFKPAQPVVFCGLFPVDAADFEDLRAAMGKLRLNDASFSFEMESSAALGFGFRCGFLGLLHLEIIQERLEREFDLDLIATAPSVVYKMYMTDGTERELHNPADMPDVVKISEIHEPWIRATILTPDDYLGGILKLCQDRRGIQIELTYVGTRAMLTYDLPLNEVVFDFYDRLKSISKGYASFDYTLTDHREGNLVKMSILVNGEPVDALSMMVHRTAAEKRGRDMCEKLKELIPKHMFKIPIQAAIGGNVIARETISALRKDVTAKCYGGDATRKRKLLDKQKAGKKRMRQFGKVEIPQEAFIAALKMGDE</sequence>
<name>LEPA_RHIE6</name>
<keyword id="KW-0997">Cell inner membrane</keyword>
<keyword id="KW-1003">Cell membrane</keyword>
<keyword id="KW-0342">GTP-binding</keyword>
<keyword id="KW-0378">Hydrolase</keyword>
<keyword id="KW-0472">Membrane</keyword>
<keyword id="KW-0547">Nucleotide-binding</keyword>
<keyword id="KW-0648">Protein biosynthesis</keyword>
<organism>
    <name type="scientific">Rhizobium etli (strain CIAT 652)</name>
    <dbReference type="NCBI Taxonomy" id="491916"/>
    <lineage>
        <taxon>Bacteria</taxon>
        <taxon>Pseudomonadati</taxon>
        <taxon>Pseudomonadota</taxon>
        <taxon>Alphaproteobacteria</taxon>
        <taxon>Hyphomicrobiales</taxon>
        <taxon>Rhizobiaceae</taxon>
        <taxon>Rhizobium/Agrobacterium group</taxon>
        <taxon>Rhizobium</taxon>
    </lineage>
</organism>
<comment type="function">
    <text evidence="1">Required for accurate and efficient protein synthesis under certain stress conditions. May act as a fidelity factor of the translation reaction, by catalyzing a one-codon backward translocation of tRNAs on improperly translocated ribosomes. Back-translocation proceeds from a post-translocation (POST) complex to a pre-translocation (PRE) complex, thus giving elongation factor G a second chance to translocate the tRNAs correctly. Binds to ribosomes in a GTP-dependent manner.</text>
</comment>
<comment type="catalytic activity">
    <reaction evidence="1">
        <text>GTP + H2O = GDP + phosphate + H(+)</text>
        <dbReference type="Rhea" id="RHEA:19669"/>
        <dbReference type="ChEBI" id="CHEBI:15377"/>
        <dbReference type="ChEBI" id="CHEBI:15378"/>
        <dbReference type="ChEBI" id="CHEBI:37565"/>
        <dbReference type="ChEBI" id="CHEBI:43474"/>
        <dbReference type="ChEBI" id="CHEBI:58189"/>
        <dbReference type="EC" id="3.6.5.n1"/>
    </reaction>
</comment>
<comment type="subcellular location">
    <subcellularLocation>
        <location evidence="1">Cell inner membrane</location>
        <topology evidence="1">Peripheral membrane protein</topology>
        <orientation evidence="1">Cytoplasmic side</orientation>
    </subcellularLocation>
</comment>
<comment type="similarity">
    <text evidence="1">Belongs to the TRAFAC class translation factor GTPase superfamily. Classic translation factor GTPase family. LepA subfamily.</text>
</comment>
<proteinExistence type="inferred from homology"/>
<reference key="1">
    <citation type="journal article" date="2010" name="Appl. Environ. Microbiol.">
        <title>Conserved symbiotic plasmid DNA sequences in the multireplicon pangenomic structure of Rhizobium etli.</title>
        <authorList>
            <person name="Gonzalez V."/>
            <person name="Acosta J.L."/>
            <person name="Santamaria R.I."/>
            <person name="Bustos P."/>
            <person name="Fernandez J.L."/>
            <person name="Hernandez Gonzalez I.L."/>
            <person name="Diaz R."/>
            <person name="Flores M."/>
            <person name="Palacios R."/>
            <person name="Mora J."/>
            <person name="Davila G."/>
        </authorList>
    </citation>
    <scope>NUCLEOTIDE SEQUENCE [LARGE SCALE GENOMIC DNA]</scope>
    <source>
        <strain>CIAT 652</strain>
    </source>
</reference>